<comment type="similarity">
    <text evidence="1">Belongs to the UPF0227 family.</text>
</comment>
<name>Y1623_ENT38</name>
<reference key="1">
    <citation type="journal article" date="2010" name="PLoS Genet.">
        <title>Genome sequence of the plant growth promoting endophytic bacterium Enterobacter sp. 638.</title>
        <authorList>
            <person name="Taghavi S."/>
            <person name="van der Lelie D."/>
            <person name="Hoffman A."/>
            <person name="Zhang Y.B."/>
            <person name="Walla M.D."/>
            <person name="Vangronsveld J."/>
            <person name="Newman L."/>
            <person name="Monchy S."/>
        </authorList>
    </citation>
    <scope>NUCLEOTIDE SEQUENCE [LARGE SCALE GENOMIC DNA]</scope>
    <source>
        <strain>638</strain>
    </source>
</reference>
<sequence>MIIYLHGFDSNSPGNHEKVLQLQFIDPDVRLISYSTRHPKHDMQHLLKEVDKMLQLNVDERPLICGVGLGGYWAERIGFLCDIRQVVFNPNLFPEENMEGKIDRPEEYADIATKCVSNFREKNRDRCLAILSRQDEALNSHRAAEFLHHYYEIVWDEEQTHKFKNISPHLQRIKAFKTLG</sequence>
<organism>
    <name type="scientific">Enterobacter sp. (strain 638)</name>
    <dbReference type="NCBI Taxonomy" id="399742"/>
    <lineage>
        <taxon>Bacteria</taxon>
        <taxon>Pseudomonadati</taxon>
        <taxon>Pseudomonadota</taxon>
        <taxon>Gammaproteobacteria</taxon>
        <taxon>Enterobacterales</taxon>
        <taxon>Enterobacteriaceae</taxon>
        <taxon>Enterobacter</taxon>
    </lineage>
</organism>
<gene>
    <name type="ordered locus">Ent638_1623</name>
</gene>
<protein>
    <recommendedName>
        <fullName evidence="1">UPF0227 protein Ent638_1623</fullName>
    </recommendedName>
</protein>
<accession>A4W9C2</accession>
<evidence type="ECO:0000255" key="1">
    <source>
        <dbReference type="HAMAP-Rule" id="MF_01047"/>
    </source>
</evidence>
<proteinExistence type="inferred from homology"/>
<dbReference type="EMBL" id="CP000653">
    <property type="protein sequence ID" value="ABP60302.1"/>
    <property type="molecule type" value="Genomic_DNA"/>
</dbReference>
<dbReference type="RefSeq" id="WP_012017018.1">
    <property type="nucleotide sequence ID" value="NC_009436.1"/>
</dbReference>
<dbReference type="SMR" id="A4W9C2"/>
<dbReference type="STRING" id="399742.Ent638_1623"/>
<dbReference type="ESTHER" id="ent38-y1623">
    <property type="family name" value="abh_upf00227"/>
</dbReference>
<dbReference type="KEGG" id="ent:Ent638_1623"/>
<dbReference type="eggNOG" id="COG3150">
    <property type="taxonomic scope" value="Bacteria"/>
</dbReference>
<dbReference type="HOGENOM" id="CLU_128769_0_0_6"/>
<dbReference type="OrthoDB" id="6469735at2"/>
<dbReference type="Proteomes" id="UP000000230">
    <property type="component" value="Chromosome"/>
</dbReference>
<dbReference type="FunFam" id="3.40.50.1820:FF:000007">
    <property type="entry name" value="UPF0227 protein YcfP"/>
    <property type="match status" value="1"/>
</dbReference>
<dbReference type="Gene3D" id="3.40.50.1820">
    <property type="entry name" value="alpha/beta hydrolase"/>
    <property type="match status" value="1"/>
</dbReference>
<dbReference type="HAMAP" id="MF_01047">
    <property type="entry name" value="UPF0227"/>
    <property type="match status" value="1"/>
</dbReference>
<dbReference type="InterPro" id="IPR029058">
    <property type="entry name" value="AB_hydrolase_fold"/>
</dbReference>
<dbReference type="InterPro" id="IPR022987">
    <property type="entry name" value="UPF0227"/>
</dbReference>
<dbReference type="InterPro" id="IPR008886">
    <property type="entry name" value="UPF0227/Esterase_YqiA"/>
</dbReference>
<dbReference type="NCBIfam" id="NF003431">
    <property type="entry name" value="PRK04940.1"/>
    <property type="match status" value="1"/>
</dbReference>
<dbReference type="PANTHER" id="PTHR35602">
    <property type="entry name" value="ESTERASE YQIA-RELATED"/>
    <property type="match status" value="1"/>
</dbReference>
<dbReference type="PANTHER" id="PTHR35602:SF2">
    <property type="entry name" value="UPF0227 PROTEIN YCFP"/>
    <property type="match status" value="1"/>
</dbReference>
<dbReference type="Pfam" id="PF05728">
    <property type="entry name" value="UPF0227"/>
    <property type="match status" value="1"/>
</dbReference>
<dbReference type="SUPFAM" id="SSF53474">
    <property type="entry name" value="alpha/beta-Hydrolases"/>
    <property type="match status" value="1"/>
</dbReference>
<feature type="chain" id="PRO_1000064290" description="UPF0227 protein Ent638_1623">
    <location>
        <begin position="1"/>
        <end position="180"/>
    </location>
</feature>